<sequence length="600" mass="65575">MAKEIILGIDLGTTNSVVAIIENQKPVVLENPNGKRTTPSVVAFKNNEEIVGDAAKRQLETNPEAIASIKRLMGTDKTVRANERDYKPEEISAKILAYLKEYAEKKIGHKVTKAVITVPAYFDNAQREATKNAGKIAGLQVERIINEPTAAALAFGLDKTEKEMKVLVYDLGGGTFDVSVLELSGGTFEVLSTSGDNHLGGDDWDNEIVNWLVKKIKEVYDFDPKSDKMALTRLKEEAEKTKINLSNQSVSTVSLPFLGMGKNGPINVELELKRSEFEKMTAHLIDRTRKPIVDALKQAKIEASDLDEVLLVGGSTRMPAVQSMIEHTLNKKPNRSINPDEVVAIGAAIQGGVLAGEISDVLLLDVTPLTLGIETLGGIATPLIPRNTTIPVTKSQIFSTAEDNQTEVTISVVQGERQLAADNKMLGRFNLSGIEAAPRGLPQIEVSFSIDVNGITTVSAKDKKTGKEQTITIKNTSTLSEEEINKMIQEAEENREADALKKDKIETTVRAEGLINQLEKSITDQGEKIDPKQKELLEKQIQELKDLLKEDKTDELKLKLDQIEAAAQSFAQATAQQANTSESDPKADDSNTIDAEIKQD</sequence>
<organism>
    <name type="scientific">Mesomycoplasma hyopneumoniae (strain 232)</name>
    <name type="common">Mycoplasma hyopneumoniae</name>
    <dbReference type="NCBI Taxonomy" id="295358"/>
    <lineage>
        <taxon>Bacteria</taxon>
        <taxon>Bacillati</taxon>
        <taxon>Mycoplasmatota</taxon>
        <taxon>Mycoplasmoidales</taxon>
        <taxon>Metamycoplasmataceae</taxon>
        <taxon>Mesomycoplasma</taxon>
    </lineage>
</organism>
<name>DNAK_MESH2</name>
<keyword id="KW-0067">ATP-binding</keyword>
<keyword id="KW-0143">Chaperone</keyword>
<keyword id="KW-0547">Nucleotide-binding</keyword>
<keyword id="KW-0597">Phosphoprotein</keyword>
<keyword id="KW-0346">Stress response</keyword>
<dbReference type="EMBL" id="U50209">
    <property type="protein sequence ID" value="AAB01921.1"/>
    <property type="molecule type" value="Genomic_DNA"/>
</dbReference>
<dbReference type="EMBL" id="AE017332">
    <property type="protein sequence ID" value="AAV27395.1"/>
    <property type="status" value="ALT_INIT"/>
    <property type="molecule type" value="Genomic_DNA"/>
</dbReference>
<dbReference type="RefSeq" id="WP_044284771.1">
    <property type="nucleotide sequence ID" value="NC_006360.1"/>
</dbReference>
<dbReference type="SMR" id="Q49539"/>
<dbReference type="KEGG" id="mhy:mhp072"/>
<dbReference type="eggNOG" id="COG0443">
    <property type="taxonomic scope" value="Bacteria"/>
</dbReference>
<dbReference type="HOGENOM" id="CLU_005965_2_4_14"/>
<dbReference type="PhylomeDB" id="Q49539"/>
<dbReference type="Proteomes" id="UP000006822">
    <property type="component" value="Chromosome"/>
</dbReference>
<dbReference type="GO" id="GO:0005524">
    <property type="term" value="F:ATP binding"/>
    <property type="evidence" value="ECO:0007669"/>
    <property type="project" value="UniProtKB-UniRule"/>
</dbReference>
<dbReference type="GO" id="GO:0140662">
    <property type="term" value="F:ATP-dependent protein folding chaperone"/>
    <property type="evidence" value="ECO:0007669"/>
    <property type="project" value="InterPro"/>
</dbReference>
<dbReference type="GO" id="GO:0051082">
    <property type="term" value="F:unfolded protein binding"/>
    <property type="evidence" value="ECO:0007669"/>
    <property type="project" value="InterPro"/>
</dbReference>
<dbReference type="CDD" id="cd10234">
    <property type="entry name" value="ASKHA_NBD_HSP70_DnaK-like"/>
    <property type="match status" value="1"/>
</dbReference>
<dbReference type="FunFam" id="2.60.34.10:FF:000014">
    <property type="entry name" value="Chaperone protein DnaK HSP70"/>
    <property type="match status" value="1"/>
</dbReference>
<dbReference type="FunFam" id="3.30.420.40:FF:000071">
    <property type="entry name" value="Molecular chaperone DnaK"/>
    <property type="match status" value="1"/>
</dbReference>
<dbReference type="FunFam" id="3.90.640.10:FF:000003">
    <property type="entry name" value="Molecular chaperone DnaK"/>
    <property type="match status" value="1"/>
</dbReference>
<dbReference type="Gene3D" id="1.20.1270.10">
    <property type="match status" value="1"/>
</dbReference>
<dbReference type="Gene3D" id="3.30.420.40">
    <property type="match status" value="2"/>
</dbReference>
<dbReference type="Gene3D" id="3.90.640.10">
    <property type="entry name" value="Actin, Chain A, domain 4"/>
    <property type="match status" value="1"/>
</dbReference>
<dbReference type="Gene3D" id="2.60.34.10">
    <property type="entry name" value="Substrate Binding Domain Of DNAk, Chain A, domain 1"/>
    <property type="match status" value="1"/>
</dbReference>
<dbReference type="HAMAP" id="MF_00332">
    <property type="entry name" value="DnaK"/>
    <property type="match status" value="1"/>
</dbReference>
<dbReference type="InterPro" id="IPR043129">
    <property type="entry name" value="ATPase_NBD"/>
</dbReference>
<dbReference type="InterPro" id="IPR012725">
    <property type="entry name" value="Chaperone_DnaK"/>
</dbReference>
<dbReference type="InterPro" id="IPR018181">
    <property type="entry name" value="Heat_shock_70_CS"/>
</dbReference>
<dbReference type="InterPro" id="IPR029048">
    <property type="entry name" value="HSP70_C_sf"/>
</dbReference>
<dbReference type="InterPro" id="IPR029047">
    <property type="entry name" value="HSP70_peptide-bd_sf"/>
</dbReference>
<dbReference type="InterPro" id="IPR013126">
    <property type="entry name" value="Hsp_70_fam"/>
</dbReference>
<dbReference type="NCBIfam" id="NF001413">
    <property type="entry name" value="PRK00290.1"/>
    <property type="match status" value="1"/>
</dbReference>
<dbReference type="NCBIfam" id="TIGR02350">
    <property type="entry name" value="prok_dnaK"/>
    <property type="match status" value="1"/>
</dbReference>
<dbReference type="PANTHER" id="PTHR19375">
    <property type="entry name" value="HEAT SHOCK PROTEIN 70KDA"/>
    <property type="match status" value="1"/>
</dbReference>
<dbReference type="Pfam" id="PF00012">
    <property type="entry name" value="HSP70"/>
    <property type="match status" value="1"/>
</dbReference>
<dbReference type="PRINTS" id="PR00301">
    <property type="entry name" value="HEATSHOCK70"/>
</dbReference>
<dbReference type="SUPFAM" id="SSF53067">
    <property type="entry name" value="Actin-like ATPase domain"/>
    <property type="match status" value="2"/>
</dbReference>
<dbReference type="SUPFAM" id="SSF100934">
    <property type="entry name" value="Heat shock protein 70kD (HSP70), C-terminal subdomain"/>
    <property type="match status" value="1"/>
</dbReference>
<dbReference type="SUPFAM" id="SSF100920">
    <property type="entry name" value="Heat shock protein 70kD (HSP70), peptide-binding domain"/>
    <property type="match status" value="1"/>
</dbReference>
<dbReference type="PROSITE" id="PS00297">
    <property type="entry name" value="HSP70_1"/>
    <property type="match status" value="1"/>
</dbReference>
<dbReference type="PROSITE" id="PS00329">
    <property type="entry name" value="HSP70_2"/>
    <property type="match status" value="1"/>
</dbReference>
<dbReference type="PROSITE" id="PS01036">
    <property type="entry name" value="HSP70_3"/>
    <property type="match status" value="1"/>
</dbReference>
<accession>Q49539</accession>
<accession>Q601X9</accession>
<reference key="1">
    <citation type="submission" date="1996-02" db="EMBL/GenBank/DDBJ databases">
        <authorList>
            <person name="Chou S.Y."/>
            <person name="Shiuan D."/>
        </authorList>
    </citation>
    <scope>NUCLEOTIDE SEQUENCE [GENOMIC DNA]</scope>
</reference>
<reference key="2">
    <citation type="journal article" date="2004" name="J. Bacteriol.">
        <title>The genome sequence of Mycoplasma hyopneumoniae strain 232, the agent of swine mycoplasmosis.</title>
        <authorList>
            <person name="Minion F.C."/>
            <person name="Lefkowitz E.J."/>
            <person name="Madsen M.L."/>
            <person name="Cleary B.J."/>
            <person name="Swartzell S.M."/>
            <person name="Mahairas G.G."/>
        </authorList>
    </citation>
    <scope>NUCLEOTIDE SEQUENCE [LARGE SCALE GENOMIC DNA]</scope>
    <source>
        <strain>232</strain>
    </source>
</reference>
<proteinExistence type="inferred from homology"/>
<evidence type="ECO:0000250" key="1"/>
<evidence type="ECO:0000256" key="2">
    <source>
        <dbReference type="SAM" id="MobiDB-lite"/>
    </source>
</evidence>
<evidence type="ECO:0000305" key="3"/>
<comment type="function">
    <text evidence="1">Acts as a chaperone.</text>
</comment>
<comment type="induction">
    <text evidence="1">By stress conditions e.g. heat shock (By similarity).</text>
</comment>
<comment type="similarity">
    <text evidence="3">Belongs to the heat shock protein 70 family.</text>
</comment>
<comment type="sequence caution" evidence="3">
    <conflict type="erroneous initiation">
        <sequence resource="EMBL-CDS" id="AAV27395"/>
    </conflict>
</comment>
<gene>
    <name type="primary">dnaK</name>
    <name type="ordered locus">mhp072</name>
</gene>
<protein>
    <recommendedName>
        <fullName>Chaperone protein DnaK</fullName>
    </recommendedName>
    <alternativeName>
        <fullName>65 kDa protein</fullName>
    </alternativeName>
    <alternativeName>
        <fullName>HSP70</fullName>
    </alternativeName>
    <alternativeName>
        <fullName>Heat shock 70 kDa protein</fullName>
    </alternativeName>
    <alternativeName>
        <fullName>Heat shock protein 70</fullName>
    </alternativeName>
    <alternativeName>
        <fullName>P65</fullName>
    </alternativeName>
</protein>
<feature type="chain" id="PRO_0000078492" description="Chaperone protein DnaK">
    <location>
        <begin position="1"/>
        <end position="600"/>
    </location>
</feature>
<feature type="region of interest" description="Disordered" evidence="2">
    <location>
        <begin position="570"/>
        <end position="600"/>
    </location>
</feature>
<feature type="compositionally biased region" description="Basic and acidic residues" evidence="2">
    <location>
        <begin position="583"/>
        <end position="600"/>
    </location>
</feature>
<feature type="modified residue" description="Phosphothreonine; by autocatalysis" evidence="1">
    <location>
        <position position="175"/>
    </location>
</feature>